<proteinExistence type="inferred from homology"/>
<dbReference type="EMBL" id="AP009373">
    <property type="protein sequence ID" value="BAF50367.1"/>
    <property type="molecule type" value="Genomic_DNA"/>
</dbReference>
<dbReference type="RefSeq" id="YP_001123543.1">
    <property type="nucleotide sequence ID" value="NC_009272.1"/>
</dbReference>
<dbReference type="SMR" id="A4QL12"/>
<dbReference type="GeneID" id="4964765"/>
<dbReference type="GO" id="GO:0009535">
    <property type="term" value="C:chloroplast thylakoid membrane"/>
    <property type="evidence" value="ECO:0007669"/>
    <property type="project" value="UniProtKB-SubCell"/>
</dbReference>
<dbReference type="GO" id="GO:0009512">
    <property type="term" value="C:cytochrome b6f complex"/>
    <property type="evidence" value="ECO:0007669"/>
    <property type="project" value="InterPro"/>
</dbReference>
<dbReference type="GO" id="GO:0045158">
    <property type="term" value="F:electron transporter, transferring electrons within cytochrome b6/f complex of photosystem II activity"/>
    <property type="evidence" value="ECO:0007669"/>
    <property type="project" value="InterPro"/>
</dbReference>
<dbReference type="GO" id="GO:0017004">
    <property type="term" value="P:cytochrome complex assembly"/>
    <property type="evidence" value="ECO:0007669"/>
    <property type="project" value="UniProtKB-UniRule"/>
</dbReference>
<dbReference type="GO" id="GO:0015979">
    <property type="term" value="P:photosynthesis"/>
    <property type="evidence" value="ECO:0007669"/>
    <property type="project" value="UniProtKB-KW"/>
</dbReference>
<dbReference type="HAMAP" id="MF_00395">
    <property type="entry name" value="Cytb6_f_PetN"/>
    <property type="match status" value="1"/>
</dbReference>
<dbReference type="InterPro" id="IPR036143">
    <property type="entry name" value="Cytochr_b6-f_cplx_su8_sf"/>
</dbReference>
<dbReference type="InterPro" id="IPR005497">
    <property type="entry name" value="Cytochrome_b6-f_cplx_su8"/>
</dbReference>
<dbReference type="Pfam" id="PF03742">
    <property type="entry name" value="PetN"/>
    <property type="match status" value="1"/>
</dbReference>
<dbReference type="SUPFAM" id="SSF103451">
    <property type="entry name" value="PetN subunit of the cytochrome b6f complex"/>
    <property type="match status" value="1"/>
</dbReference>
<organism>
    <name type="scientific">Draba nemorosa</name>
    <name type="common">Woodland whitlowgrass</name>
    <dbReference type="NCBI Taxonomy" id="171822"/>
    <lineage>
        <taxon>Eukaryota</taxon>
        <taxon>Viridiplantae</taxon>
        <taxon>Streptophyta</taxon>
        <taxon>Embryophyta</taxon>
        <taxon>Tracheophyta</taxon>
        <taxon>Spermatophyta</taxon>
        <taxon>Magnoliopsida</taxon>
        <taxon>eudicotyledons</taxon>
        <taxon>Gunneridae</taxon>
        <taxon>Pentapetalae</taxon>
        <taxon>rosids</taxon>
        <taxon>malvids</taxon>
        <taxon>Brassicales</taxon>
        <taxon>Brassicaceae</taxon>
        <taxon>Arabideae</taxon>
        <taxon>Draba</taxon>
    </lineage>
</organism>
<comment type="function">
    <text evidence="1">Component of the cytochrome b6-f complex, which mediates electron transfer between photosystem II (PSII) and photosystem I (PSI), cyclic electron flow around PSI, and state transitions.</text>
</comment>
<comment type="subunit">
    <text evidence="1">The 4 large subunits of the cytochrome b6-f complex are cytochrome b6, subunit IV (17 kDa polypeptide, PetD), cytochrome f and the Rieske protein, while the 4 small subunits are PetG, PetL, PetM and PetN. The complex functions as a dimer.</text>
</comment>
<comment type="subcellular location">
    <subcellularLocation>
        <location evidence="1">Plastid</location>
        <location evidence="1">Chloroplast thylakoid membrane</location>
        <topology evidence="1">Single-pass membrane protein</topology>
    </subcellularLocation>
</comment>
<comment type="similarity">
    <text evidence="1">Belongs to the PetN family.</text>
</comment>
<protein>
    <recommendedName>
        <fullName evidence="1">Cytochrome b6-f complex subunit 8</fullName>
    </recommendedName>
    <alternativeName>
        <fullName evidence="1">Cytochrome b6-f complex subunit PetN</fullName>
    </alternativeName>
    <alternativeName>
        <fullName evidence="1">Cytochrome b6-f complex subunit VIII</fullName>
    </alternativeName>
</protein>
<keyword id="KW-0150">Chloroplast</keyword>
<keyword id="KW-0249">Electron transport</keyword>
<keyword id="KW-0472">Membrane</keyword>
<keyword id="KW-0602">Photosynthesis</keyword>
<keyword id="KW-0934">Plastid</keyword>
<keyword id="KW-0793">Thylakoid</keyword>
<keyword id="KW-0812">Transmembrane</keyword>
<keyword id="KW-1133">Transmembrane helix</keyword>
<keyword id="KW-0813">Transport</keyword>
<name>PETN_DRANE</name>
<feature type="chain" id="PRO_0000355438" description="Cytochrome b6-f complex subunit 8">
    <location>
        <begin position="1"/>
        <end position="29"/>
    </location>
</feature>
<feature type="transmembrane region" description="Helical" evidence="1">
    <location>
        <begin position="3"/>
        <end position="23"/>
    </location>
</feature>
<gene>
    <name evidence="1" type="primary">petN</name>
</gene>
<sequence length="29" mass="3156">MDIVSLAWAGLMVVFTFSLSLVVWGRSGL</sequence>
<evidence type="ECO:0000255" key="1">
    <source>
        <dbReference type="HAMAP-Rule" id="MF_00395"/>
    </source>
</evidence>
<geneLocation type="chloroplast"/>
<accession>A4QL12</accession>
<reference key="1">
    <citation type="submission" date="2007-03" db="EMBL/GenBank/DDBJ databases">
        <title>Sequencing analysis of Draba nemoroza chloroplast DNA.</title>
        <authorList>
            <person name="Hosouchi T."/>
            <person name="Tsuruoka H."/>
            <person name="Kotani H."/>
        </authorList>
    </citation>
    <scope>NUCLEOTIDE SEQUENCE [LARGE SCALE GENOMIC DNA]</scope>
</reference>